<reference key="1">
    <citation type="journal article" date="1992" name="Virology">
        <title>The nucleotide sequence and genome organization of the RNA2 and RNA3 segments in broad bean mottle virus.</title>
        <authorList>
            <person name="Romero J."/>
            <person name="Dzianott A.M."/>
            <person name="Bujarski J.J."/>
        </authorList>
    </citation>
    <scope>NUCLEOTIDE SEQUENCE [GENOMIC RNA]</scope>
</reference>
<name>RDRP_BBMV</name>
<gene>
    <name type="ORF">ORF2a</name>
</gene>
<accession>P27462</accession>
<dbReference type="EC" id="2.7.7.48"/>
<dbReference type="EMBL" id="M64713">
    <property type="protein sequence ID" value="AAA42741.1"/>
    <property type="molecule type" value="Genomic_RNA"/>
</dbReference>
<dbReference type="PIR" id="A42453">
    <property type="entry name" value="P2WMBB"/>
</dbReference>
<dbReference type="RefSeq" id="NP_658999.1">
    <property type="nucleotide sequence ID" value="NC_004007.1"/>
</dbReference>
<dbReference type="KEGG" id="vg:962139"/>
<dbReference type="OrthoDB" id="1928at10239"/>
<dbReference type="Proteomes" id="UP000007448">
    <property type="component" value="Genome"/>
</dbReference>
<dbReference type="GO" id="GO:0003723">
    <property type="term" value="F:RNA binding"/>
    <property type="evidence" value="ECO:0007669"/>
    <property type="project" value="InterPro"/>
</dbReference>
<dbReference type="GO" id="GO:0003968">
    <property type="term" value="F:RNA-directed RNA polymerase activity"/>
    <property type="evidence" value="ECO:0007669"/>
    <property type="project" value="UniProtKB-KW"/>
</dbReference>
<dbReference type="GO" id="GO:0006351">
    <property type="term" value="P:DNA-templated transcription"/>
    <property type="evidence" value="ECO:0007669"/>
    <property type="project" value="InterPro"/>
</dbReference>
<dbReference type="InterPro" id="IPR007610">
    <property type="entry name" value="BBMV_Gp1_N"/>
</dbReference>
<dbReference type="InterPro" id="IPR043502">
    <property type="entry name" value="DNA/RNA_pol_sf"/>
</dbReference>
<dbReference type="InterPro" id="IPR001788">
    <property type="entry name" value="RNA-dep_RNA_pol_alsuvir"/>
</dbReference>
<dbReference type="Pfam" id="PF04522">
    <property type="entry name" value="BBMV_Gp1_N"/>
    <property type="match status" value="1"/>
</dbReference>
<dbReference type="Pfam" id="PF00978">
    <property type="entry name" value="RdRP_2"/>
    <property type="match status" value="1"/>
</dbReference>
<dbReference type="SUPFAM" id="SSF56672">
    <property type="entry name" value="DNA/RNA polymerases"/>
    <property type="match status" value="1"/>
</dbReference>
<keyword id="KW-0548">Nucleotidyltransferase</keyword>
<keyword id="KW-0696">RNA-directed RNA polymerase</keyword>
<keyword id="KW-0808">Transferase</keyword>
<sequence>MSKFVAADEYIVPSFQWLLGPTSSQVESFDSSVAGWIKRYEDESKRPESTVDGSCESFVLAVKPVMIGGQCEPAYDQAKWAETCLNVTNLASGLTGVRLIPLPEMARMIYLDEEDSFVDESEVDDWYPEDTSDGFEYLSADGSDYHQNSEPEEEVLDKSNGTLESEEARHETDVKSICSFRDIPVETTMGHRYLALSEEFASIEVDYQVSSIVTPLNKGSIYMTLDVHEETHPKSGIQDKASIERLEAAGHNALKTHAYFDDSYYEGFEESADFSSDFQRLKIKQSHVDWYKDPDKFFEPVLNFGASSRRVGSQKTVLTALKKRNADVPELSDVVDATEVPICLRQSYLNIYGADCLFESFNIMAKGLDYHKRWKSHKELQGVTLLCETNLQRYQHMIKSDVKPTVTDTLHVERDVPATITFHGKGVTSCFSPFFTACFEKFSLALRESIYVPIGKISSLELKSKALNNKFFLEADLSKFDKSQGELHLEFQRLILINLGFPVPLTNWWCDFHRSILSRWTLRPGVSIPLLSKTNRGCFHLLWEHFSDNAMMAYCFDMSTAELAMFSGDDSLVICGSKPEFDPGVFQSLFNMEVKVMDPSLPYICSKFLLESEFGDVFSVPDPMREIQRLQKRKIPKDVQVLRADFDSFCDRMKFLDRLSELSLSVLCRLTALKYCKPGIEGDVRAWLSGFAYYRENFLRYSECYVTDGIHCYRRVDPMSRFKPIDKFQRSDKEWFHDWRNNEFPKKPIDKMARMFGAYKGPVNNDRVERKAKYKVNAAMHDPFALAYERRYVQELELKNDKGNCSVLRE</sequence>
<organismHost>
    <name type="scientific">Vicia faba</name>
    <name type="common">Broad bean</name>
    <name type="synonym">Faba vulgaris</name>
    <dbReference type="NCBI Taxonomy" id="3906"/>
</organismHost>
<comment type="function">
    <text evidence="3">RNA-dependent RNA polymerase which replicates the viral genome composed of 3 RNA segments, RNA1, RNA2 and RNA3.</text>
</comment>
<comment type="catalytic activity">
    <reaction>
        <text>RNA(n) + a ribonucleoside 5'-triphosphate = RNA(n+1) + diphosphate</text>
        <dbReference type="Rhea" id="RHEA:21248"/>
        <dbReference type="Rhea" id="RHEA-COMP:14527"/>
        <dbReference type="Rhea" id="RHEA-COMP:17342"/>
        <dbReference type="ChEBI" id="CHEBI:33019"/>
        <dbReference type="ChEBI" id="CHEBI:61557"/>
        <dbReference type="ChEBI" id="CHEBI:140395"/>
        <dbReference type="EC" id="2.7.7.48"/>
    </reaction>
</comment>
<comment type="subunit">
    <text evidence="1">Interacts with replication protein 1a.</text>
</comment>
<comment type="similarity">
    <text evidence="3">Belongs to the ssRNA positive-strand viruses RNA-directed RNA polymerase family.</text>
</comment>
<organism>
    <name type="scientific">Broad bean mottle virus</name>
    <dbReference type="NCBI Taxonomy" id="12301"/>
    <lineage>
        <taxon>Viruses</taxon>
        <taxon>Riboviria</taxon>
        <taxon>Orthornavirae</taxon>
        <taxon>Kitrinoviricota</taxon>
        <taxon>Alsuviricetes</taxon>
        <taxon>Martellivirales</taxon>
        <taxon>Bromoviridae</taxon>
        <taxon>Bromovirus</taxon>
    </lineage>
</organism>
<protein>
    <recommendedName>
        <fullName>RNA-directed RNA polymerase 2a</fullName>
        <shortName>protein 2a</shortName>
        <ecNumber>2.7.7.48</ecNumber>
    </recommendedName>
</protein>
<evidence type="ECO:0000250" key="1"/>
<evidence type="ECO:0000256" key="2">
    <source>
        <dbReference type="SAM" id="MobiDB-lite"/>
    </source>
</evidence>
<evidence type="ECO:0000305" key="3"/>
<proteinExistence type="inferred from homology"/>
<feature type="chain" id="PRO_0000083268" description="RNA-directed RNA polymerase 2a">
    <location>
        <begin position="1"/>
        <end position="810"/>
    </location>
</feature>
<feature type="region of interest" description="Disordered" evidence="2">
    <location>
        <begin position="140"/>
        <end position="160"/>
    </location>
</feature>